<accession>A5PN52</accession>
<name>HOATZ_DANRE</name>
<feature type="chain" id="PRO_0000360983" description="Cilia- and flagella-associated protein HOATZ">
    <location>
        <begin position="1"/>
        <end position="164"/>
    </location>
</feature>
<feature type="region of interest" description="Disordered" evidence="2">
    <location>
        <begin position="132"/>
        <end position="164"/>
    </location>
</feature>
<sequence length="164" mass="19187">MSEELDEEVLDGLTEVEKLYTVFHGASQEDVAYAKLFWNSLSLQPPIESRLVSSDIRQRLKVAKTPNTTNAAANQAPWSKRNEEIQQDAYLRQKQEEKQRYMEMAKNRDQIIALLKKQRDERIKKEMIAYKHKPKKGKLEEKRLAPKTLSSDVDEDQKEVQKLQ</sequence>
<comment type="function">
    <text evidence="1">May be required for motile ciliogenesis and flagellar genesis.</text>
</comment>
<comment type="subcellular location">
    <subcellularLocation>
        <location evidence="1">Cytoplasm</location>
    </subcellularLocation>
    <subcellularLocation>
        <location evidence="1">Cell projection</location>
        <location evidence="1">Cilium</location>
    </subcellularLocation>
</comment>
<comment type="similarity">
    <text evidence="3">Belongs to the HOATZ family.</text>
</comment>
<organism>
    <name type="scientific">Danio rerio</name>
    <name type="common">Zebrafish</name>
    <name type="synonym">Brachydanio rerio</name>
    <dbReference type="NCBI Taxonomy" id="7955"/>
    <lineage>
        <taxon>Eukaryota</taxon>
        <taxon>Metazoa</taxon>
        <taxon>Chordata</taxon>
        <taxon>Craniata</taxon>
        <taxon>Vertebrata</taxon>
        <taxon>Euteleostomi</taxon>
        <taxon>Actinopterygii</taxon>
        <taxon>Neopterygii</taxon>
        <taxon>Teleostei</taxon>
        <taxon>Ostariophysi</taxon>
        <taxon>Cypriniformes</taxon>
        <taxon>Danionidae</taxon>
        <taxon>Danioninae</taxon>
        <taxon>Danio</taxon>
    </lineage>
</organism>
<gene>
    <name type="primary">hoatz</name>
    <name type="ORF">si:dkey-27p23.3</name>
</gene>
<keyword id="KW-0966">Cell projection</keyword>
<keyword id="KW-0963">Cytoplasm</keyword>
<keyword id="KW-1185">Reference proteome</keyword>
<evidence type="ECO:0000250" key="1">
    <source>
        <dbReference type="UniProtKB" id="Q80Y73"/>
    </source>
</evidence>
<evidence type="ECO:0000256" key="2">
    <source>
        <dbReference type="SAM" id="MobiDB-lite"/>
    </source>
</evidence>
<evidence type="ECO:0000305" key="3"/>
<protein>
    <recommendedName>
        <fullName evidence="1">Cilia- and flagella-associated protein HOATZ</fullName>
    </recommendedName>
</protein>
<dbReference type="EMBL" id="BX950179">
    <property type="protein sequence ID" value="CAN88251.1"/>
    <property type="molecule type" value="Genomic_DNA"/>
</dbReference>
<dbReference type="RefSeq" id="NP_001093491.2">
    <property type="nucleotide sequence ID" value="NM_001100021.2"/>
</dbReference>
<dbReference type="SMR" id="A5PN52"/>
<dbReference type="FunCoup" id="A5PN52">
    <property type="interactions" value="411"/>
</dbReference>
<dbReference type="PaxDb" id="7955-ENSDARP00000122168"/>
<dbReference type="Ensembl" id="ENSDART00000132376">
    <property type="protein sequence ID" value="ENSDARP00000122168"/>
    <property type="gene ID" value="ENSDARG00000075714"/>
</dbReference>
<dbReference type="GeneID" id="566423"/>
<dbReference type="KEGG" id="dre:566423"/>
<dbReference type="AGR" id="ZFIN:ZDB-GENE-070705-453"/>
<dbReference type="CTD" id="399949"/>
<dbReference type="ZFIN" id="ZDB-GENE-070705-453">
    <property type="gene designation" value="hoatz"/>
</dbReference>
<dbReference type="eggNOG" id="ENOG502S8UY">
    <property type="taxonomic scope" value="Eukaryota"/>
</dbReference>
<dbReference type="HOGENOM" id="CLU_122904_1_0_1"/>
<dbReference type="InParanoid" id="A5PN52"/>
<dbReference type="OMA" id="TVCSERQ"/>
<dbReference type="OrthoDB" id="10004365at2759"/>
<dbReference type="PhylomeDB" id="A5PN52"/>
<dbReference type="PRO" id="PR:A5PN52"/>
<dbReference type="Proteomes" id="UP000000437">
    <property type="component" value="Alternate scaffold 5"/>
</dbReference>
<dbReference type="Proteomes" id="UP000000437">
    <property type="component" value="Chromosome 5"/>
</dbReference>
<dbReference type="Bgee" id="ENSDARG00000075714">
    <property type="expression patterns" value="Expressed in testis and 11 other cell types or tissues"/>
</dbReference>
<dbReference type="ExpressionAtlas" id="A5PN52">
    <property type="expression patterns" value="baseline"/>
</dbReference>
<dbReference type="GO" id="GO:0005929">
    <property type="term" value="C:cilium"/>
    <property type="evidence" value="ECO:0000250"/>
    <property type="project" value="UniProtKB"/>
</dbReference>
<dbReference type="GO" id="GO:0005737">
    <property type="term" value="C:cytoplasm"/>
    <property type="evidence" value="ECO:0000250"/>
    <property type="project" value="UniProtKB"/>
</dbReference>
<dbReference type="GO" id="GO:0060271">
    <property type="term" value="P:cilium assembly"/>
    <property type="evidence" value="ECO:0007669"/>
    <property type="project" value="InterPro"/>
</dbReference>
<dbReference type="InterPro" id="IPR040681">
    <property type="entry name" value="HOATZ-like"/>
</dbReference>
<dbReference type="PANTHER" id="PTHR47231:SF1">
    <property type="entry name" value="CILIA- AND FLAGELLA-ASSOCIATED PROTEIN HOATZ"/>
    <property type="match status" value="1"/>
</dbReference>
<dbReference type="PANTHER" id="PTHR47231">
    <property type="entry name" value="UPF0722 PROTEIN C11ORF88"/>
    <property type="match status" value="1"/>
</dbReference>
<dbReference type="Pfam" id="PF17664">
    <property type="entry name" value="HOATZ-like"/>
    <property type="match status" value="1"/>
</dbReference>
<reference key="1">
    <citation type="journal article" date="2013" name="Nature">
        <title>The zebrafish reference genome sequence and its relationship to the human genome.</title>
        <authorList>
            <person name="Howe K."/>
            <person name="Clark M.D."/>
            <person name="Torroja C.F."/>
            <person name="Torrance J."/>
            <person name="Berthelot C."/>
            <person name="Muffato M."/>
            <person name="Collins J.E."/>
            <person name="Humphray S."/>
            <person name="McLaren K."/>
            <person name="Matthews L."/>
            <person name="McLaren S."/>
            <person name="Sealy I."/>
            <person name="Caccamo M."/>
            <person name="Churcher C."/>
            <person name="Scott C."/>
            <person name="Barrett J.C."/>
            <person name="Koch R."/>
            <person name="Rauch G.J."/>
            <person name="White S."/>
            <person name="Chow W."/>
            <person name="Kilian B."/>
            <person name="Quintais L.T."/>
            <person name="Guerra-Assuncao J.A."/>
            <person name="Zhou Y."/>
            <person name="Gu Y."/>
            <person name="Yen J."/>
            <person name="Vogel J.H."/>
            <person name="Eyre T."/>
            <person name="Redmond S."/>
            <person name="Banerjee R."/>
            <person name="Chi J."/>
            <person name="Fu B."/>
            <person name="Langley E."/>
            <person name="Maguire S.F."/>
            <person name="Laird G.K."/>
            <person name="Lloyd D."/>
            <person name="Kenyon E."/>
            <person name="Donaldson S."/>
            <person name="Sehra H."/>
            <person name="Almeida-King J."/>
            <person name="Loveland J."/>
            <person name="Trevanion S."/>
            <person name="Jones M."/>
            <person name="Quail M."/>
            <person name="Willey D."/>
            <person name="Hunt A."/>
            <person name="Burton J."/>
            <person name="Sims S."/>
            <person name="McLay K."/>
            <person name="Plumb B."/>
            <person name="Davis J."/>
            <person name="Clee C."/>
            <person name="Oliver K."/>
            <person name="Clark R."/>
            <person name="Riddle C."/>
            <person name="Elliot D."/>
            <person name="Threadgold G."/>
            <person name="Harden G."/>
            <person name="Ware D."/>
            <person name="Begum S."/>
            <person name="Mortimore B."/>
            <person name="Kerry G."/>
            <person name="Heath P."/>
            <person name="Phillimore B."/>
            <person name="Tracey A."/>
            <person name="Corby N."/>
            <person name="Dunn M."/>
            <person name="Johnson C."/>
            <person name="Wood J."/>
            <person name="Clark S."/>
            <person name="Pelan S."/>
            <person name="Griffiths G."/>
            <person name="Smith M."/>
            <person name="Glithero R."/>
            <person name="Howden P."/>
            <person name="Barker N."/>
            <person name="Lloyd C."/>
            <person name="Stevens C."/>
            <person name="Harley J."/>
            <person name="Holt K."/>
            <person name="Panagiotidis G."/>
            <person name="Lovell J."/>
            <person name="Beasley H."/>
            <person name="Henderson C."/>
            <person name="Gordon D."/>
            <person name="Auger K."/>
            <person name="Wright D."/>
            <person name="Collins J."/>
            <person name="Raisen C."/>
            <person name="Dyer L."/>
            <person name="Leung K."/>
            <person name="Robertson L."/>
            <person name="Ambridge K."/>
            <person name="Leongamornlert D."/>
            <person name="McGuire S."/>
            <person name="Gilderthorp R."/>
            <person name="Griffiths C."/>
            <person name="Manthravadi D."/>
            <person name="Nichol S."/>
            <person name="Barker G."/>
            <person name="Whitehead S."/>
            <person name="Kay M."/>
            <person name="Brown J."/>
            <person name="Murnane C."/>
            <person name="Gray E."/>
            <person name="Humphries M."/>
            <person name="Sycamore N."/>
            <person name="Barker D."/>
            <person name="Saunders D."/>
            <person name="Wallis J."/>
            <person name="Babbage A."/>
            <person name="Hammond S."/>
            <person name="Mashreghi-Mohammadi M."/>
            <person name="Barr L."/>
            <person name="Martin S."/>
            <person name="Wray P."/>
            <person name="Ellington A."/>
            <person name="Matthews N."/>
            <person name="Ellwood M."/>
            <person name="Woodmansey R."/>
            <person name="Clark G."/>
            <person name="Cooper J."/>
            <person name="Tromans A."/>
            <person name="Grafham D."/>
            <person name="Skuce C."/>
            <person name="Pandian R."/>
            <person name="Andrews R."/>
            <person name="Harrison E."/>
            <person name="Kimberley A."/>
            <person name="Garnett J."/>
            <person name="Fosker N."/>
            <person name="Hall R."/>
            <person name="Garner P."/>
            <person name="Kelly D."/>
            <person name="Bird C."/>
            <person name="Palmer S."/>
            <person name="Gehring I."/>
            <person name="Berger A."/>
            <person name="Dooley C.M."/>
            <person name="Ersan-Urun Z."/>
            <person name="Eser C."/>
            <person name="Geiger H."/>
            <person name="Geisler M."/>
            <person name="Karotki L."/>
            <person name="Kirn A."/>
            <person name="Konantz J."/>
            <person name="Konantz M."/>
            <person name="Oberlander M."/>
            <person name="Rudolph-Geiger S."/>
            <person name="Teucke M."/>
            <person name="Lanz C."/>
            <person name="Raddatz G."/>
            <person name="Osoegawa K."/>
            <person name="Zhu B."/>
            <person name="Rapp A."/>
            <person name="Widaa S."/>
            <person name="Langford C."/>
            <person name="Yang F."/>
            <person name="Schuster S.C."/>
            <person name="Carter N.P."/>
            <person name="Harrow J."/>
            <person name="Ning Z."/>
            <person name="Herrero J."/>
            <person name="Searle S.M."/>
            <person name="Enright A."/>
            <person name="Geisler R."/>
            <person name="Plasterk R.H."/>
            <person name="Lee C."/>
            <person name="Westerfield M."/>
            <person name="de Jong P.J."/>
            <person name="Zon L.I."/>
            <person name="Postlethwait J.H."/>
            <person name="Nusslein-Volhard C."/>
            <person name="Hubbard T.J."/>
            <person name="Roest Crollius H."/>
            <person name="Rogers J."/>
            <person name="Stemple D.L."/>
        </authorList>
    </citation>
    <scope>NUCLEOTIDE SEQUENCE [LARGE SCALE GENOMIC DNA]</scope>
    <source>
        <strain>Tuebingen</strain>
    </source>
</reference>
<proteinExistence type="inferred from homology"/>